<proteinExistence type="inferred from homology"/>
<gene>
    <name evidence="1" type="primary">fbp2</name>
    <name type="ordered locus">Daro_3628</name>
</gene>
<organism>
    <name type="scientific">Dechloromonas aromatica (strain RCB)</name>
    <dbReference type="NCBI Taxonomy" id="159087"/>
    <lineage>
        <taxon>Bacteria</taxon>
        <taxon>Pseudomonadati</taxon>
        <taxon>Pseudomonadota</taxon>
        <taxon>Betaproteobacteria</taxon>
        <taxon>Rhodocyclales</taxon>
        <taxon>Azonexaceae</taxon>
        <taxon>Dechloromonas</taxon>
    </lineage>
</organism>
<keyword id="KW-0119">Carbohydrate metabolism</keyword>
<keyword id="KW-0963">Cytoplasm</keyword>
<keyword id="KW-0378">Hydrolase</keyword>
<keyword id="KW-0460">Magnesium</keyword>
<keyword id="KW-0479">Metal-binding</keyword>
<dbReference type="EC" id="3.1.3.11" evidence="1"/>
<dbReference type="EMBL" id="CP000089">
    <property type="protein sequence ID" value="AAZ48357.1"/>
    <property type="molecule type" value="Genomic_DNA"/>
</dbReference>
<dbReference type="SMR" id="Q479X4"/>
<dbReference type="STRING" id="159087.Daro_3628"/>
<dbReference type="KEGG" id="dar:Daro_3628"/>
<dbReference type="eggNOG" id="COG0158">
    <property type="taxonomic scope" value="Bacteria"/>
</dbReference>
<dbReference type="HOGENOM" id="CLU_039977_0_0_4"/>
<dbReference type="OrthoDB" id="9806756at2"/>
<dbReference type="UniPathway" id="UPA00138"/>
<dbReference type="GO" id="GO:0005829">
    <property type="term" value="C:cytosol"/>
    <property type="evidence" value="ECO:0007669"/>
    <property type="project" value="TreeGrafter"/>
</dbReference>
<dbReference type="GO" id="GO:0042132">
    <property type="term" value="F:fructose 1,6-bisphosphate 1-phosphatase activity"/>
    <property type="evidence" value="ECO:0007669"/>
    <property type="project" value="UniProtKB-UniRule"/>
</dbReference>
<dbReference type="GO" id="GO:0000287">
    <property type="term" value="F:magnesium ion binding"/>
    <property type="evidence" value="ECO:0007669"/>
    <property type="project" value="UniProtKB-UniRule"/>
</dbReference>
<dbReference type="GO" id="GO:0030388">
    <property type="term" value="P:fructose 1,6-bisphosphate metabolic process"/>
    <property type="evidence" value="ECO:0007669"/>
    <property type="project" value="TreeGrafter"/>
</dbReference>
<dbReference type="GO" id="GO:0006002">
    <property type="term" value="P:fructose 6-phosphate metabolic process"/>
    <property type="evidence" value="ECO:0007669"/>
    <property type="project" value="TreeGrafter"/>
</dbReference>
<dbReference type="GO" id="GO:0006000">
    <property type="term" value="P:fructose metabolic process"/>
    <property type="evidence" value="ECO:0007669"/>
    <property type="project" value="TreeGrafter"/>
</dbReference>
<dbReference type="GO" id="GO:0006094">
    <property type="term" value="P:gluconeogenesis"/>
    <property type="evidence" value="ECO:0007669"/>
    <property type="project" value="UniProtKB-UniRule"/>
</dbReference>
<dbReference type="GO" id="GO:0005986">
    <property type="term" value="P:sucrose biosynthetic process"/>
    <property type="evidence" value="ECO:0007669"/>
    <property type="project" value="TreeGrafter"/>
</dbReference>
<dbReference type="CDD" id="cd00354">
    <property type="entry name" value="FBPase"/>
    <property type="match status" value="1"/>
</dbReference>
<dbReference type="FunFam" id="3.30.540.10:FF:000002">
    <property type="entry name" value="Fructose-1,6-bisphosphatase class 1"/>
    <property type="match status" value="1"/>
</dbReference>
<dbReference type="FunFam" id="3.40.190.80:FF:000011">
    <property type="entry name" value="Fructose-1,6-bisphosphatase class 1"/>
    <property type="match status" value="1"/>
</dbReference>
<dbReference type="Gene3D" id="3.40.190.80">
    <property type="match status" value="1"/>
</dbReference>
<dbReference type="Gene3D" id="3.30.540.10">
    <property type="entry name" value="Fructose-1,6-Bisphosphatase, subunit A, domain 1"/>
    <property type="match status" value="1"/>
</dbReference>
<dbReference type="HAMAP" id="MF_01855">
    <property type="entry name" value="FBPase_class1"/>
    <property type="match status" value="1"/>
</dbReference>
<dbReference type="InterPro" id="IPR044015">
    <property type="entry name" value="FBPase_C_dom"/>
</dbReference>
<dbReference type="InterPro" id="IPR000146">
    <property type="entry name" value="FBPase_class-1"/>
</dbReference>
<dbReference type="InterPro" id="IPR033391">
    <property type="entry name" value="FBPase_N"/>
</dbReference>
<dbReference type="InterPro" id="IPR028343">
    <property type="entry name" value="FBPtase"/>
</dbReference>
<dbReference type="InterPro" id="IPR020548">
    <property type="entry name" value="Fructose_bisphosphatase_AS"/>
</dbReference>
<dbReference type="NCBIfam" id="NF006778">
    <property type="entry name" value="PRK09293.1-1"/>
    <property type="match status" value="1"/>
</dbReference>
<dbReference type="NCBIfam" id="NF006779">
    <property type="entry name" value="PRK09293.1-3"/>
    <property type="match status" value="1"/>
</dbReference>
<dbReference type="NCBIfam" id="NF006780">
    <property type="entry name" value="PRK09293.1-4"/>
    <property type="match status" value="1"/>
</dbReference>
<dbReference type="PANTHER" id="PTHR11556">
    <property type="entry name" value="FRUCTOSE-1,6-BISPHOSPHATASE-RELATED"/>
    <property type="match status" value="1"/>
</dbReference>
<dbReference type="PANTHER" id="PTHR11556:SF35">
    <property type="entry name" value="SEDOHEPTULOSE-1,7-BISPHOSPHATASE, CHLOROPLASTIC"/>
    <property type="match status" value="1"/>
</dbReference>
<dbReference type="Pfam" id="PF00316">
    <property type="entry name" value="FBPase"/>
    <property type="match status" value="1"/>
</dbReference>
<dbReference type="Pfam" id="PF18913">
    <property type="entry name" value="FBPase_C"/>
    <property type="match status" value="1"/>
</dbReference>
<dbReference type="PIRSF" id="PIRSF500210">
    <property type="entry name" value="FBPtase"/>
    <property type="match status" value="1"/>
</dbReference>
<dbReference type="PIRSF" id="PIRSF000904">
    <property type="entry name" value="FBPtase_SBPase"/>
    <property type="match status" value="1"/>
</dbReference>
<dbReference type="PRINTS" id="PR00115">
    <property type="entry name" value="F16BPHPHTASE"/>
</dbReference>
<dbReference type="SUPFAM" id="SSF56655">
    <property type="entry name" value="Carbohydrate phosphatase"/>
    <property type="match status" value="1"/>
</dbReference>
<dbReference type="PROSITE" id="PS00124">
    <property type="entry name" value="FBPASE"/>
    <property type="match status" value="1"/>
</dbReference>
<protein>
    <recommendedName>
        <fullName evidence="1">Fructose-1,6-bisphosphatase class 1 2</fullName>
        <shortName evidence="1">FBPase class 1 2</shortName>
        <ecNumber evidence="1">3.1.3.11</ecNumber>
    </recommendedName>
    <alternativeName>
        <fullName evidence="1">D-fructose-1,6-bisphosphate 1-phosphohydrolase class 1 2</fullName>
    </alternativeName>
</protein>
<accession>Q479X4</accession>
<reference key="1">
    <citation type="journal article" date="2009" name="BMC Genomics">
        <title>Metabolic analysis of the soil microbe Dechloromonas aromatica str. RCB: indications of a surprisingly complex life-style and cryptic anaerobic pathways for aromatic degradation.</title>
        <authorList>
            <person name="Salinero K.K."/>
            <person name="Keller K."/>
            <person name="Feil W.S."/>
            <person name="Feil H."/>
            <person name="Trong S."/>
            <person name="Di Bartolo G."/>
            <person name="Lapidus A."/>
        </authorList>
    </citation>
    <scope>NUCLEOTIDE SEQUENCE [LARGE SCALE GENOMIC DNA]</scope>
    <source>
        <strain>RCB</strain>
    </source>
</reference>
<evidence type="ECO:0000255" key="1">
    <source>
        <dbReference type="HAMAP-Rule" id="MF_01855"/>
    </source>
</evidence>
<feature type="chain" id="PRO_0000364535" description="Fructose-1,6-bisphosphatase class 1 2">
    <location>
        <begin position="1"/>
        <end position="357"/>
    </location>
</feature>
<feature type="binding site" evidence="1">
    <location>
        <position position="90"/>
    </location>
    <ligand>
        <name>Mg(2+)</name>
        <dbReference type="ChEBI" id="CHEBI:18420"/>
        <label>1</label>
    </ligand>
</feature>
<feature type="binding site" evidence="1">
    <location>
        <position position="112"/>
    </location>
    <ligand>
        <name>Mg(2+)</name>
        <dbReference type="ChEBI" id="CHEBI:18420"/>
        <label>1</label>
    </ligand>
</feature>
<feature type="binding site" evidence="1">
    <location>
        <position position="112"/>
    </location>
    <ligand>
        <name>Mg(2+)</name>
        <dbReference type="ChEBI" id="CHEBI:18420"/>
        <label>2</label>
    </ligand>
</feature>
<feature type="binding site" evidence="1">
    <location>
        <position position="114"/>
    </location>
    <ligand>
        <name>Mg(2+)</name>
        <dbReference type="ChEBI" id="CHEBI:18420"/>
        <label>1</label>
    </ligand>
</feature>
<feature type="binding site" evidence="1">
    <location>
        <begin position="115"/>
        <end position="118"/>
    </location>
    <ligand>
        <name>substrate</name>
    </ligand>
</feature>
<feature type="binding site" evidence="1">
    <location>
        <position position="115"/>
    </location>
    <ligand>
        <name>Mg(2+)</name>
        <dbReference type="ChEBI" id="CHEBI:18420"/>
        <label>2</label>
    </ligand>
</feature>
<feature type="binding site" evidence="1">
    <location>
        <position position="206"/>
    </location>
    <ligand>
        <name>substrate</name>
    </ligand>
</feature>
<feature type="binding site" evidence="1">
    <location>
        <position position="278"/>
    </location>
    <ligand>
        <name>Mg(2+)</name>
        <dbReference type="ChEBI" id="CHEBI:18420"/>
        <label>2</label>
    </ligand>
</feature>
<comment type="catalytic activity">
    <reaction evidence="1">
        <text>beta-D-fructose 1,6-bisphosphate + H2O = beta-D-fructose 6-phosphate + phosphate</text>
        <dbReference type="Rhea" id="RHEA:11064"/>
        <dbReference type="ChEBI" id="CHEBI:15377"/>
        <dbReference type="ChEBI" id="CHEBI:32966"/>
        <dbReference type="ChEBI" id="CHEBI:43474"/>
        <dbReference type="ChEBI" id="CHEBI:57634"/>
        <dbReference type="EC" id="3.1.3.11"/>
    </reaction>
</comment>
<comment type="cofactor">
    <cofactor evidence="1">
        <name>Mg(2+)</name>
        <dbReference type="ChEBI" id="CHEBI:18420"/>
    </cofactor>
    <text evidence="1">Binds 2 magnesium ions per subunit.</text>
</comment>
<comment type="pathway">
    <text evidence="1">Carbohydrate biosynthesis; gluconeogenesis.</text>
</comment>
<comment type="subunit">
    <text evidence="1">Homotetramer.</text>
</comment>
<comment type="subcellular location">
    <subcellularLocation>
        <location evidence="1">Cytoplasm</location>
    </subcellularLocation>
</comment>
<comment type="similarity">
    <text evidence="1">Belongs to the FBPase class 1 family.</text>
</comment>
<name>F16A2_DECAR</name>
<sequence>MQFGRTTLSKFVIENTRASHGELGALLIDVAAAVKTISAMVAKGALAGHHGALDSTNVQGEVQKKLDVLTNDAILRHCEWGGQLAGMASEEMDDPYPIPAEYPRGRYLLVFDPLDGSSNSDVNVSVGTIFSIFSRRAAGDAELGDYLRPGSEQVAAGYAIYGPSTMMVLTLGNGTHGFTLDRESGNFILTHANIRVPEDTREFAINTSNERFWEPPVQRYVSECKAGKSGVRGEDFNTRWIASMVAEVHRILIRGGIFMYPKDSKDPSKPGRLRLLYEANPMAMLIEQAGGAASTGRQRILDVVPDSLHQRAPVILGSKNEVERLARYHHEYDTGADRPFVSPLFSERSLFRDESRA</sequence>